<reference key="1">
    <citation type="journal article" date="2005" name="Nat. Biotechnol.">
        <title>Complete genome sequence of the acetic acid bacterium Gluconobacter oxydans.</title>
        <authorList>
            <person name="Prust C."/>
            <person name="Hoffmeister M."/>
            <person name="Liesegang H."/>
            <person name="Wiezer A."/>
            <person name="Fricke W.F."/>
            <person name="Ehrenreich A."/>
            <person name="Gottschalk G."/>
            <person name="Deppenmeier U."/>
        </authorList>
    </citation>
    <scope>NUCLEOTIDE SEQUENCE [LARGE SCALE GENOMIC DNA]</scope>
    <source>
        <strain>621H</strain>
    </source>
</reference>
<proteinExistence type="inferred from homology"/>
<protein>
    <recommendedName>
        <fullName evidence="1">Large ribosomal subunit protein bL33</fullName>
    </recommendedName>
    <alternativeName>
        <fullName evidence="2">50S ribosomal protein L33</fullName>
    </alternativeName>
</protein>
<organism>
    <name type="scientific">Gluconobacter oxydans (strain 621H)</name>
    <name type="common">Gluconobacter suboxydans</name>
    <dbReference type="NCBI Taxonomy" id="290633"/>
    <lineage>
        <taxon>Bacteria</taxon>
        <taxon>Pseudomonadati</taxon>
        <taxon>Pseudomonadota</taxon>
        <taxon>Alphaproteobacteria</taxon>
        <taxon>Acetobacterales</taxon>
        <taxon>Acetobacteraceae</taxon>
        <taxon>Gluconobacter</taxon>
    </lineage>
</organism>
<dbReference type="EMBL" id="CP000009">
    <property type="protein sequence ID" value="AAW62010.1"/>
    <property type="molecule type" value="Genomic_DNA"/>
</dbReference>
<dbReference type="RefSeq" id="WP_011253780.1">
    <property type="nucleotide sequence ID" value="NZ_LT900338.1"/>
</dbReference>
<dbReference type="SMR" id="Q5FNN7"/>
<dbReference type="STRING" id="290633.GOX2277"/>
<dbReference type="GeneID" id="76194868"/>
<dbReference type="KEGG" id="gox:GOX2277"/>
<dbReference type="eggNOG" id="COG0267">
    <property type="taxonomic scope" value="Bacteria"/>
</dbReference>
<dbReference type="HOGENOM" id="CLU_190949_1_1_5"/>
<dbReference type="Proteomes" id="UP000006375">
    <property type="component" value="Chromosome"/>
</dbReference>
<dbReference type="GO" id="GO:0022625">
    <property type="term" value="C:cytosolic large ribosomal subunit"/>
    <property type="evidence" value="ECO:0007669"/>
    <property type="project" value="TreeGrafter"/>
</dbReference>
<dbReference type="GO" id="GO:0003735">
    <property type="term" value="F:structural constituent of ribosome"/>
    <property type="evidence" value="ECO:0007669"/>
    <property type="project" value="InterPro"/>
</dbReference>
<dbReference type="GO" id="GO:0006412">
    <property type="term" value="P:translation"/>
    <property type="evidence" value="ECO:0007669"/>
    <property type="project" value="UniProtKB-UniRule"/>
</dbReference>
<dbReference type="Gene3D" id="2.20.28.120">
    <property type="entry name" value="Ribosomal protein L33"/>
    <property type="match status" value="1"/>
</dbReference>
<dbReference type="HAMAP" id="MF_00294">
    <property type="entry name" value="Ribosomal_bL33"/>
    <property type="match status" value="1"/>
</dbReference>
<dbReference type="InterPro" id="IPR001705">
    <property type="entry name" value="Ribosomal_bL33"/>
</dbReference>
<dbReference type="InterPro" id="IPR018264">
    <property type="entry name" value="Ribosomal_bL33_CS"/>
</dbReference>
<dbReference type="InterPro" id="IPR038584">
    <property type="entry name" value="Ribosomal_bL33_sf"/>
</dbReference>
<dbReference type="InterPro" id="IPR011332">
    <property type="entry name" value="Ribosomal_zn-bd"/>
</dbReference>
<dbReference type="NCBIfam" id="NF001860">
    <property type="entry name" value="PRK00595.1"/>
    <property type="match status" value="1"/>
</dbReference>
<dbReference type="NCBIfam" id="TIGR01023">
    <property type="entry name" value="rpmG_bact"/>
    <property type="match status" value="1"/>
</dbReference>
<dbReference type="PANTHER" id="PTHR15238">
    <property type="entry name" value="54S RIBOSOMAL PROTEIN L39, MITOCHONDRIAL"/>
    <property type="match status" value="1"/>
</dbReference>
<dbReference type="PANTHER" id="PTHR15238:SF1">
    <property type="entry name" value="LARGE RIBOSOMAL SUBUNIT PROTEIN BL33M"/>
    <property type="match status" value="1"/>
</dbReference>
<dbReference type="Pfam" id="PF00471">
    <property type="entry name" value="Ribosomal_L33"/>
    <property type="match status" value="1"/>
</dbReference>
<dbReference type="SUPFAM" id="SSF57829">
    <property type="entry name" value="Zn-binding ribosomal proteins"/>
    <property type="match status" value="1"/>
</dbReference>
<dbReference type="PROSITE" id="PS00582">
    <property type="entry name" value="RIBOSOMAL_L33"/>
    <property type="match status" value="1"/>
</dbReference>
<feature type="chain" id="PRO_0000356476" description="Large ribosomal subunit protein bL33">
    <location>
        <begin position="1"/>
        <end position="55"/>
    </location>
</feature>
<accession>Q5FNN7</accession>
<gene>
    <name evidence="1" type="primary">rpmG</name>
    <name type="ordered locus">GOX2277</name>
</gene>
<comment type="similarity">
    <text evidence="1">Belongs to the bacterial ribosomal protein bL33 family.</text>
</comment>
<name>RL33_GLUOX</name>
<keyword id="KW-1185">Reference proteome</keyword>
<keyword id="KW-0687">Ribonucleoprotein</keyword>
<keyword id="KW-0689">Ribosomal protein</keyword>
<sequence length="55" mass="6288">MGKSNVIQIRLVSSAETGYFYVTKKNARSATGKMEVRKYDPVARKHVVFREAKIK</sequence>
<evidence type="ECO:0000255" key="1">
    <source>
        <dbReference type="HAMAP-Rule" id="MF_00294"/>
    </source>
</evidence>
<evidence type="ECO:0000305" key="2"/>